<organism>
    <name type="scientific">Mus musculus</name>
    <name type="common">Mouse</name>
    <dbReference type="NCBI Taxonomy" id="10090"/>
    <lineage>
        <taxon>Eukaryota</taxon>
        <taxon>Metazoa</taxon>
        <taxon>Chordata</taxon>
        <taxon>Craniata</taxon>
        <taxon>Vertebrata</taxon>
        <taxon>Euteleostomi</taxon>
        <taxon>Mammalia</taxon>
        <taxon>Eutheria</taxon>
        <taxon>Euarchontoglires</taxon>
        <taxon>Glires</taxon>
        <taxon>Rodentia</taxon>
        <taxon>Myomorpha</taxon>
        <taxon>Muroidea</taxon>
        <taxon>Muridae</taxon>
        <taxon>Murinae</taxon>
        <taxon>Mus</taxon>
        <taxon>Mus</taxon>
    </lineage>
</organism>
<evidence type="ECO:0000250" key="1"/>
<evidence type="ECO:0000250" key="2">
    <source>
        <dbReference type="UniProtKB" id="P29320"/>
    </source>
</evidence>
<evidence type="ECO:0000255" key="3"/>
<evidence type="ECO:0000255" key="4">
    <source>
        <dbReference type="PROSITE-ProRule" id="PRU00159"/>
    </source>
</evidence>
<evidence type="ECO:0000255" key="5">
    <source>
        <dbReference type="PROSITE-ProRule" id="PRU00184"/>
    </source>
</evidence>
<evidence type="ECO:0000255" key="6">
    <source>
        <dbReference type="PROSITE-ProRule" id="PRU00316"/>
    </source>
</evidence>
<evidence type="ECO:0000255" key="7">
    <source>
        <dbReference type="PROSITE-ProRule" id="PRU00883"/>
    </source>
</evidence>
<evidence type="ECO:0000255" key="8">
    <source>
        <dbReference type="PROSITE-ProRule" id="PRU10028"/>
    </source>
</evidence>
<evidence type="ECO:0000269" key="9">
    <source>
    </source>
</evidence>
<evidence type="ECO:0000269" key="10">
    <source>
    </source>
</evidence>
<evidence type="ECO:0000269" key="11">
    <source>
    </source>
</evidence>
<evidence type="ECO:0000269" key="12">
    <source>
    </source>
</evidence>
<evidence type="ECO:0000269" key="13">
    <source>
    </source>
</evidence>
<evidence type="ECO:0000269" key="14">
    <source>
    </source>
</evidence>
<evidence type="ECO:0000303" key="15">
    <source>
    </source>
</evidence>
<evidence type="ECO:0007744" key="16">
    <source>
    </source>
</evidence>
<feature type="signal peptide" evidence="1">
    <location>
        <begin position="1"/>
        <end position="20"/>
    </location>
</feature>
<feature type="chain" id="PRO_0000016803" description="Ephrin type-A receptor 3">
    <location>
        <begin position="21"/>
        <end position="983"/>
    </location>
</feature>
<feature type="topological domain" description="Extracellular" evidence="3">
    <location>
        <begin position="21"/>
        <end position="540"/>
    </location>
</feature>
<feature type="transmembrane region" description="Helical" evidence="3">
    <location>
        <begin position="541"/>
        <end position="564"/>
    </location>
</feature>
<feature type="topological domain" description="Cytoplasmic" evidence="3">
    <location>
        <begin position="565"/>
        <end position="983"/>
    </location>
</feature>
<feature type="domain" description="Eph LBD" evidence="7">
    <location>
        <begin position="29"/>
        <end position="206"/>
    </location>
</feature>
<feature type="domain" description="Fibronectin type-III 1" evidence="6">
    <location>
        <begin position="324"/>
        <end position="434"/>
    </location>
</feature>
<feature type="domain" description="Fibronectin type-III 2" evidence="6">
    <location>
        <begin position="435"/>
        <end position="530"/>
    </location>
</feature>
<feature type="domain" description="Protein kinase" evidence="4">
    <location>
        <begin position="621"/>
        <end position="882"/>
    </location>
</feature>
<feature type="domain" description="SAM" evidence="5">
    <location>
        <begin position="911"/>
        <end position="975"/>
    </location>
</feature>
<feature type="short sequence motif" description="PDZ-binding" evidence="3">
    <location>
        <begin position="981"/>
        <end position="983"/>
    </location>
</feature>
<feature type="active site" description="Proton acceptor" evidence="4 8">
    <location>
        <position position="746"/>
    </location>
</feature>
<feature type="binding site" evidence="4">
    <location>
        <begin position="628"/>
        <end position="633"/>
    </location>
    <ligand>
        <name>ATP</name>
        <dbReference type="ChEBI" id="CHEBI:30616"/>
    </ligand>
</feature>
<feature type="binding site" evidence="4">
    <location>
        <position position="653"/>
    </location>
    <ligand>
        <name>ATP</name>
        <dbReference type="ChEBI" id="CHEBI:30616"/>
    </ligand>
</feature>
<feature type="binding site" evidence="4">
    <location>
        <begin position="700"/>
        <end position="706"/>
    </location>
    <ligand>
        <name>ATP</name>
        <dbReference type="ChEBI" id="CHEBI:30616"/>
    </ligand>
</feature>
<feature type="binding site" evidence="4">
    <location>
        <begin position="750"/>
        <end position="751"/>
    </location>
    <ligand>
        <name>ATP</name>
        <dbReference type="ChEBI" id="CHEBI:30616"/>
    </ligand>
</feature>
<feature type="modified residue" description="Phosphotyrosine; by autocatalysis" evidence="2">
    <location>
        <position position="596"/>
    </location>
</feature>
<feature type="modified residue" description="Phosphotyrosine; by autocatalysis" evidence="2">
    <location>
        <position position="602"/>
    </location>
</feature>
<feature type="modified residue" description="Phosphotyrosine; by autocatalysis" evidence="2">
    <location>
        <position position="701"/>
    </location>
</feature>
<feature type="modified residue" description="Phosphotyrosine; by autocatalysis" evidence="2">
    <location>
        <position position="779"/>
    </location>
</feature>
<feature type="modified residue" description="Phosphotyrosine" evidence="16">
    <location>
        <position position="937"/>
    </location>
</feature>
<feature type="glycosylation site" description="N-linked (GlcNAc...) asparagine" evidence="3">
    <location>
        <position position="231"/>
    </location>
</feature>
<feature type="glycosylation site" description="N-linked (GlcNAc...) asparagine" evidence="3">
    <location>
        <position position="336"/>
    </location>
</feature>
<feature type="glycosylation site" description="N-linked (GlcNAc...) asparagine" evidence="3">
    <location>
        <position position="390"/>
    </location>
</feature>
<feature type="glycosylation site" description="N-linked (GlcNAc...) asparagine" evidence="3">
    <location>
        <position position="403"/>
    </location>
</feature>
<feature type="glycosylation site" description="N-linked (GlcNAc...) asparagine" evidence="3">
    <location>
        <position position="492"/>
    </location>
</feature>
<feature type="splice variant" id="VSP_041882" description="In isoform Short." evidence="15">
    <original>SFSISGE</original>
    <variation>CMYYFSF</variation>
    <location>
        <begin position="531"/>
        <end position="537"/>
    </location>
</feature>
<feature type="splice variant" id="VSP_041883" description="In isoform Short." evidence="15">
    <location>
        <begin position="538"/>
        <end position="983"/>
    </location>
</feature>
<dbReference type="EC" id="2.7.10.1"/>
<dbReference type="EMBL" id="M68513">
    <property type="protein sequence ID" value="AAA39521.1"/>
    <property type="molecule type" value="mRNA"/>
</dbReference>
<dbReference type="EMBL" id="M68515">
    <property type="protein sequence ID" value="AAA39522.1"/>
    <property type="molecule type" value="mRNA"/>
</dbReference>
<dbReference type="PIR" id="A45583">
    <property type="entry name" value="A45583"/>
</dbReference>
<dbReference type="SMR" id="P29319"/>
<dbReference type="FunCoup" id="P29319">
    <property type="interactions" value="398"/>
</dbReference>
<dbReference type="STRING" id="10090.ENSMUSP00000066554"/>
<dbReference type="BindingDB" id="P29319"/>
<dbReference type="ChEMBL" id="CHEMBL2034794"/>
<dbReference type="GuidetoPHARMACOLOGY" id="1823"/>
<dbReference type="GlyCosmos" id="P29319">
    <property type="glycosylation" value="5 sites, No reported glycans"/>
</dbReference>
<dbReference type="GlyGen" id="P29319">
    <property type="glycosylation" value="5 sites, 2 N-linked glycans (2 sites)"/>
</dbReference>
<dbReference type="iPTMnet" id="P29319"/>
<dbReference type="PhosphoSitePlus" id="P29319"/>
<dbReference type="PaxDb" id="10090-ENSMUSP00000066554"/>
<dbReference type="ProteomicsDB" id="275753">
    <molecule id="P29319-1"/>
</dbReference>
<dbReference type="ProteomicsDB" id="275754">
    <molecule id="P29319-3"/>
</dbReference>
<dbReference type="AGR" id="MGI:99612"/>
<dbReference type="MGI" id="MGI:99612">
    <property type="gene designation" value="Epha3"/>
</dbReference>
<dbReference type="eggNOG" id="KOG0196">
    <property type="taxonomic scope" value="Eukaryota"/>
</dbReference>
<dbReference type="InParanoid" id="P29319"/>
<dbReference type="PhylomeDB" id="P29319"/>
<dbReference type="BRENDA" id="2.7.10.1">
    <property type="organism ID" value="3474"/>
</dbReference>
<dbReference type="Reactome" id="R-MMU-2682334">
    <property type="pathway name" value="EPH-Ephrin signaling"/>
</dbReference>
<dbReference type="Reactome" id="R-MMU-3928663">
    <property type="pathway name" value="EPHA-mediated growth cone collapse"/>
</dbReference>
<dbReference type="Reactome" id="R-MMU-3928665">
    <property type="pathway name" value="EPH-ephrin mediated repulsion of cells"/>
</dbReference>
<dbReference type="ChiTaRS" id="Epha3">
    <property type="organism name" value="mouse"/>
</dbReference>
<dbReference type="PRO" id="PR:P29319"/>
<dbReference type="Proteomes" id="UP000000589">
    <property type="component" value="Unplaced"/>
</dbReference>
<dbReference type="RNAct" id="P29319">
    <property type="molecule type" value="protein"/>
</dbReference>
<dbReference type="GO" id="GO:0005769">
    <property type="term" value="C:early endosome"/>
    <property type="evidence" value="ECO:0000250"/>
    <property type="project" value="UniProtKB"/>
</dbReference>
<dbReference type="GO" id="GO:0005576">
    <property type="term" value="C:extracellular region"/>
    <property type="evidence" value="ECO:0007669"/>
    <property type="project" value="UniProtKB-SubCell"/>
</dbReference>
<dbReference type="GO" id="GO:0098982">
    <property type="term" value="C:GABA-ergic synapse"/>
    <property type="evidence" value="ECO:0000314"/>
    <property type="project" value="SynGO"/>
</dbReference>
<dbReference type="GO" id="GO:0005886">
    <property type="term" value="C:plasma membrane"/>
    <property type="evidence" value="ECO:0000250"/>
    <property type="project" value="UniProtKB"/>
</dbReference>
<dbReference type="GO" id="GO:0098793">
    <property type="term" value="C:presynapse"/>
    <property type="evidence" value="ECO:0000314"/>
    <property type="project" value="SynGO"/>
</dbReference>
<dbReference type="GO" id="GO:0005524">
    <property type="term" value="F:ATP binding"/>
    <property type="evidence" value="ECO:0007669"/>
    <property type="project" value="UniProtKB-KW"/>
</dbReference>
<dbReference type="GO" id="GO:0005003">
    <property type="term" value="F:ephrin receptor activity"/>
    <property type="evidence" value="ECO:0000314"/>
    <property type="project" value="MGI"/>
</dbReference>
<dbReference type="GO" id="GO:0005004">
    <property type="term" value="F:GPI-linked ephrin receptor activity"/>
    <property type="evidence" value="ECO:0000250"/>
    <property type="project" value="UniProtKB"/>
</dbReference>
<dbReference type="GO" id="GO:0019838">
    <property type="term" value="F:growth factor binding"/>
    <property type="evidence" value="ECO:0000353"/>
    <property type="project" value="ARUK-UCL"/>
</dbReference>
<dbReference type="GO" id="GO:0016477">
    <property type="term" value="P:cell migration"/>
    <property type="evidence" value="ECO:0000315"/>
    <property type="project" value="UniProtKB"/>
</dbReference>
<dbReference type="GO" id="GO:0071372">
    <property type="term" value="P:cellular response to follicle-stimulating hormone stimulus"/>
    <property type="evidence" value="ECO:0000314"/>
    <property type="project" value="MGI"/>
</dbReference>
<dbReference type="GO" id="GO:0003197">
    <property type="term" value="P:endocardial cushion development"/>
    <property type="evidence" value="ECO:0000315"/>
    <property type="project" value="UniProtKB"/>
</dbReference>
<dbReference type="GO" id="GO:0048013">
    <property type="term" value="P:ephrin receptor signaling pathway"/>
    <property type="evidence" value="ECO:0000314"/>
    <property type="project" value="UniProtKB"/>
</dbReference>
<dbReference type="GO" id="GO:0097156">
    <property type="term" value="P:fasciculation of motor neuron axon"/>
    <property type="evidence" value="ECO:0000315"/>
    <property type="project" value="UniProtKB"/>
</dbReference>
<dbReference type="GO" id="GO:0097155">
    <property type="term" value="P:fasciculation of sensory neuron axon"/>
    <property type="evidence" value="ECO:0000315"/>
    <property type="project" value="UniProtKB"/>
</dbReference>
<dbReference type="GO" id="GO:0010977">
    <property type="term" value="P:negative regulation of neuron projection development"/>
    <property type="evidence" value="ECO:0000314"/>
    <property type="project" value="MGI"/>
</dbReference>
<dbReference type="GO" id="GO:0032956">
    <property type="term" value="P:regulation of actin cytoskeleton organization"/>
    <property type="evidence" value="ECO:0000250"/>
    <property type="project" value="UniProtKB"/>
</dbReference>
<dbReference type="GO" id="GO:0030334">
    <property type="term" value="P:regulation of cell migration"/>
    <property type="evidence" value="ECO:0000316"/>
    <property type="project" value="MGI"/>
</dbReference>
<dbReference type="GO" id="GO:0010717">
    <property type="term" value="P:regulation of epithelial to mesenchymal transition"/>
    <property type="evidence" value="ECO:0000315"/>
    <property type="project" value="UniProtKB"/>
</dbReference>
<dbReference type="GO" id="GO:0051893">
    <property type="term" value="P:regulation of focal adhesion assembly"/>
    <property type="evidence" value="ECO:0000250"/>
    <property type="project" value="UniProtKB"/>
</dbReference>
<dbReference type="GO" id="GO:0043087">
    <property type="term" value="P:regulation of GTPase activity"/>
    <property type="evidence" value="ECO:0000250"/>
    <property type="project" value="UniProtKB"/>
</dbReference>
<dbReference type="GO" id="GO:0070507">
    <property type="term" value="P:regulation of microtubule cytoskeleton organization"/>
    <property type="evidence" value="ECO:0000250"/>
    <property type="project" value="UniProtKB"/>
</dbReference>
<dbReference type="GO" id="GO:0099560">
    <property type="term" value="P:synaptic membrane adhesion"/>
    <property type="evidence" value="ECO:0000314"/>
    <property type="project" value="SynGO"/>
</dbReference>
<dbReference type="CDD" id="cd10481">
    <property type="entry name" value="EphR_LBD_A3"/>
    <property type="match status" value="1"/>
</dbReference>
<dbReference type="CDD" id="cd00063">
    <property type="entry name" value="FN3"/>
    <property type="match status" value="2"/>
</dbReference>
<dbReference type="CDD" id="cd05066">
    <property type="entry name" value="PTKc_EphR_A"/>
    <property type="match status" value="1"/>
</dbReference>
<dbReference type="CDD" id="cd09544">
    <property type="entry name" value="SAM_EPH-A3"/>
    <property type="match status" value="1"/>
</dbReference>
<dbReference type="FunFam" id="1.10.150.50:FF:000046">
    <property type="entry name" value="ephrin type-A receptor 3"/>
    <property type="match status" value="1"/>
</dbReference>
<dbReference type="FunFam" id="2.60.40.10:FF:000041">
    <property type="entry name" value="ephrin type-A receptor 3"/>
    <property type="match status" value="1"/>
</dbReference>
<dbReference type="FunFam" id="1.10.510.10:FF:000019">
    <property type="entry name" value="Ephrin type-A receptor 5"/>
    <property type="match status" value="1"/>
</dbReference>
<dbReference type="FunFam" id="2.10.50.10:FF:000001">
    <property type="entry name" value="Ephrin type-A receptor 5"/>
    <property type="match status" value="1"/>
</dbReference>
<dbReference type="FunFam" id="2.60.40.10:FF:000045">
    <property type="entry name" value="Ephrin type-A receptor 5"/>
    <property type="match status" value="1"/>
</dbReference>
<dbReference type="FunFam" id="2.60.40.1770:FF:000001">
    <property type="entry name" value="Ephrin type-A receptor 5"/>
    <property type="match status" value="1"/>
</dbReference>
<dbReference type="FunFam" id="3.30.200.20:FF:000001">
    <property type="entry name" value="Ephrin type-A receptor 5"/>
    <property type="match status" value="1"/>
</dbReference>
<dbReference type="FunFam" id="2.60.120.260:FF:000001">
    <property type="entry name" value="Ephrin type-A receptor 7"/>
    <property type="match status" value="1"/>
</dbReference>
<dbReference type="Gene3D" id="2.60.40.1770">
    <property type="entry name" value="ephrin a2 ectodomain"/>
    <property type="match status" value="1"/>
</dbReference>
<dbReference type="Gene3D" id="2.60.120.260">
    <property type="entry name" value="Galactose-binding domain-like"/>
    <property type="match status" value="1"/>
</dbReference>
<dbReference type="Gene3D" id="2.60.40.10">
    <property type="entry name" value="Immunoglobulins"/>
    <property type="match status" value="2"/>
</dbReference>
<dbReference type="Gene3D" id="3.30.200.20">
    <property type="entry name" value="Phosphorylase Kinase, domain 1"/>
    <property type="match status" value="1"/>
</dbReference>
<dbReference type="Gene3D" id="1.10.150.50">
    <property type="entry name" value="Transcription Factor, Ets-1"/>
    <property type="match status" value="1"/>
</dbReference>
<dbReference type="Gene3D" id="1.10.510.10">
    <property type="entry name" value="Transferase(Phosphotransferase) domain 1"/>
    <property type="match status" value="1"/>
</dbReference>
<dbReference type="Gene3D" id="2.10.50.10">
    <property type="entry name" value="Tumor Necrosis Factor Receptor, subunit A, domain 2"/>
    <property type="match status" value="1"/>
</dbReference>
<dbReference type="InterPro" id="IPR027936">
    <property type="entry name" value="Eph_TM"/>
</dbReference>
<dbReference type="InterPro" id="IPR034266">
    <property type="entry name" value="EphA3_rcpt_lig-bd"/>
</dbReference>
<dbReference type="InterPro" id="IPR001090">
    <property type="entry name" value="Ephrin_rcpt_lig-bd_dom"/>
</dbReference>
<dbReference type="InterPro" id="IPR050449">
    <property type="entry name" value="Ephrin_rcpt_TKs"/>
</dbReference>
<dbReference type="InterPro" id="IPR003961">
    <property type="entry name" value="FN3_dom"/>
</dbReference>
<dbReference type="InterPro" id="IPR036116">
    <property type="entry name" value="FN3_sf"/>
</dbReference>
<dbReference type="InterPro" id="IPR008979">
    <property type="entry name" value="Galactose-bd-like_sf"/>
</dbReference>
<dbReference type="InterPro" id="IPR009030">
    <property type="entry name" value="Growth_fac_rcpt_cys_sf"/>
</dbReference>
<dbReference type="InterPro" id="IPR013783">
    <property type="entry name" value="Ig-like_fold"/>
</dbReference>
<dbReference type="InterPro" id="IPR011009">
    <property type="entry name" value="Kinase-like_dom_sf"/>
</dbReference>
<dbReference type="InterPro" id="IPR000719">
    <property type="entry name" value="Prot_kinase_dom"/>
</dbReference>
<dbReference type="InterPro" id="IPR017441">
    <property type="entry name" value="Protein_kinase_ATP_BS"/>
</dbReference>
<dbReference type="InterPro" id="IPR001660">
    <property type="entry name" value="SAM"/>
</dbReference>
<dbReference type="InterPro" id="IPR013761">
    <property type="entry name" value="SAM/pointed_sf"/>
</dbReference>
<dbReference type="InterPro" id="IPR001245">
    <property type="entry name" value="Ser-Thr/Tyr_kinase_cat_dom"/>
</dbReference>
<dbReference type="InterPro" id="IPR011641">
    <property type="entry name" value="Tyr-kin_ephrin_A/B_rcpt-like"/>
</dbReference>
<dbReference type="InterPro" id="IPR008266">
    <property type="entry name" value="Tyr_kinase_AS"/>
</dbReference>
<dbReference type="InterPro" id="IPR020635">
    <property type="entry name" value="Tyr_kinase_cat_dom"/>
</dbReference>
<dbReference type="InterPro" id="IPR016257">
    <property type="entry name" value="Tyr_kinase_ephrin_rcpt"/>
</dbReference>
<dbReference type="InterPro" id="IPR001426">
    <property type="entry name" value="Tyr_kinase_rcpt_V_CS"/>
</dbReference>
<dbReference type="PANTHER" id="PTHR46877">
    <property type="entry name" value="EPH RECEPTOR A5"/>
    <property type="match status" value="1"/>
</dbReference>
<dbReference type="PANTHER" id="PTHR46877:SF12">
    <property type="entry name" value="EPHRIN TYPE-A RECEPTOR 3"/>
    <property type="match status" value="1"/>
</dbReference>
<dbReference type="Pfam" id="PF14575">
    <property type="entry name" value="EphA2_TM"/>
    <property type="match status" value="1"/>
</dbReference>
<dbReference type="Pfam" id="PF01404">
    <property type="entry name" value="Ephrin_lbd"/>
    <property type="match status" value="1"/>
</dbReference>
<dbReference type="Pfam" id="PF07699">
    <property type="entry name" value="Ephrin_rec_like"/>
    <property type="match status" value="1"/>
</dbReference>
<dbReference type="Pfam" id="PF00041">
    <property type="entry name" value="fn3"/>
    <property type="match status" value="2"/>
</dbReference>
<dbReference type="Pfam" id="PF07714">
    <property type="entry name" value="PK_Tyr_Ser-Thr"/>
    <property type="match status" value="1"/>
</dbReference>
<dbReference type="Pfam" id="PF07647">
    <property type="entry name" value="SAM_2"/>
    <property type="match status" value="1"/>
</dbReference>
<dbReference type="PIRSF" id="PIRSF000666">
    <property type="entry name" value="TyrPK_ephrin_receptor"/>
    <property type="match status" value="1"/>
</dbReference>
<dbReference type="PRINTS" id="PR00014">
    <property type="entry name" value="FNTYPEIII"/>
</dbReference>
<dbReference type="PRINTS" id="PR00109">
    <property type="entry name" value="TYRKINASE"/>
</dbReference>
<dbReference type="SMART" id="SM00615">
    <property type="entry name" value="EPH_lbd"/>
    <property type="match status" value="1"/>
</dbReference>
<dbReference type="SMART" id="SM01411">
    <property type="entry name" value="Ephrin_rec_like"/>
    <property type="match status" value="1"/>
</dbReference>
<dbReference type="SMART" id="SM00060">
    <property type="entry name" value="FN3"/>
    <property type="match status" value="2"/>
</dbReference>
<dbReference type="SMART" id="SM00454">
    <property type="entry name" value="SAM"/>
    <property type="match status" value="1"/>
</dbReference>
<dbReference type="SMART" id="SM00219">
    <property type="entry name" value="TyrKc"/>
    <property type="match status" value="1"/>
</dbReference>
<dbReference type="SUPFAM" id="SSF49265">
    <property type="entry name" value="Fibronectin type III"/>
    <property type="match status" value="1"/>
</dbReference>
<dbReference type="SUPFAM" id="SSF49785">
    <property type="entry name" value="Galactose-binding domain-like"/>
    <property type="match status" value="1"/>
</dbReference>
<dbReference type="SUPFAM" id="SSF57184">
    <property type="entry name" value="Growth factor receptor domain"/>
    <property type="match status" value="1"/>
</dbReference>
<dbReference type="SUPFAM" id="SSF56112">
    <property type="entry name" value="Protein kinase-like (PK-like)"/>
    <property type="match status" value="1"/>
</dbReference>
<dbReference type="SUPFAM" id="SSF47769">
    <property type="entry name" value="SAM/Pointed domain"/>
    <property type="match status" value="1"/>
</dbReference>
<dbReference type="PROSITE" id="PS01186">
    <property type="entry name" value="EGF_2"/>
    <property type="match status" value="1"/>
</dbReference>
<dbReference type="PROSITE" id="PS51550">
    <property type="entry name" value="EPH_LBD"/>
    <property type="match status" value="1"/>
</dbReference>
<dbReference type="PROSITE" id="PS50853">
    <property type="entry name" value="FN3"/>
    <property type="match status" value="2"/>
</dbReference>
<dbReference type="PROSITE" id="PS00107">
    <property type="entry name" value="PROTEIN_KINASE_ATP"/>
    <property type="match status" value="1"/>
</dbReference>
<dbReference type="PROSITE" id="PS50011">
    <property type="entry name" value="PROTEIN_KINASE_DOM"/>
    <property type="match status" value="1"/>
</dbReference>
<dbReference type="PROSITE" id="PS00109">
    <property type="entry name" value="PROTEIN_KINASE_TYR"/>
    <property type="match status" value="1"/>
</dbReference>
<dbReference type="PROSITE" id="PS00790">
    <property type="entry name" value="RECEPTOR_TYR_KIN_V_1"/>
    <property type="match status" value="1"/>
</dbReference>
<dbReference type="PROSITE" id="PS00791">
    <property type="entry name" value="RECEPTOR_TYR_KIN_V_2"/>
    <property type="match status" value="1"/>
</dbReference>
<dbReference type="PROSITE" id="PS50105">
    <property type="entry name" value="SAM_DOMAIN"/>
    <property type="match status" value="1"/>
</dbReference>
<proteinExistence type="evidence at protein level"/>
<name>EPHA3_MOUSE</name>
<reference key="1">
    <citation type="journal article" date="1991" name="New Biol.">
        <title>Identification of a new eph-related receptor tyrosine kinase gene from mouse and chicken that is developmentally regulated and encodes at least two forms of the receptor.</title>
        <authorList>
            <person name="Sajjadi F.G."/>
            <person name="Pasquale E.B."/>
            <person name="Subramani S."/>
        </authorList>
    </citation>
    <scope>NUCLEOTIDE SEQUENCE [MRNA] (ISOFORMS LONG AND SHORT)</scope>
    <source>
        <strain>ICR X Swiss Webster</strain>
        <tissue>Embryo</tissue>
    </source>
</reference>
<reference key="2">
    <citation type="journal article" date="2002" name="J. Cell Sci.">
        <title>Ephrin-A5 induces rounding, blebbing and de-adhesion of EphA3-expressing 293T and melanoma cells by CrkII and Rho-mediated signalling.</title>
        <authorList>
            <person name="Lawrenson I.D."/>
            <person name="Wimmer-Kleikamp S.H."/>
            <person name="Lock P."/>
            <person name="Schoenwaelder S.M."/>
            <person name="Down M."/>
            <person name="Boyd A.W."/>
            <person name="Alewood P.F."/>
            <person name="Lackmann M."/>
        </authorList>
    </citation>
    <scope>INTERACTION WITH CRK</scope>
</reference>
<reference key="3">
    <citation type="journal article" date="2003" name="Mol. Cell. Biol.">
        <title>EphA3 null mutants do not demonstrate motor axon guidance defects.</title>
        <authorList>
            <person name="Vaidya A."/>
            <person name="Pniak A."/>
            <person name="Lemke G."/>
            <person name="Brown A."/>
        </authorList>
    </citation>
    <scope>DISRUPTION PHENOTYPE</scope>
    <scope>DEVELOPMENTAL STAGE</scope>
</reference>
<reference key="4">
    <citation type="journal article" date="2007" name="Dev. Biol.">
        <title>A critical role for the EphA3 receptor tyrosine kinase in heart development.</title>
        <authorList>
            <person name="Stephen L.J."/>
            <person name="Fawkes A.L."/>
            <person name="Verhoeve A."/>
            <person name="Lemke G."/>
            <person name="Brown A."/>
        </authorList>
    </citation>
    <scope>DISRUPTION PHENOTYPE</scope>
    <scope>FUNCTION IN HEART DEVELOPMENT</scope>
    <scope>DEVELOPMENTAL STAGE</scope>
</reference>
<reference key="5">
    <citation type="journal article" date="2007" name="J. Immunol.">
        <title>Quantitative time-resolved phosphoproteomic analysis of mast cell signaling.</title>
        <authorList>
            <person name="Cao L."/>
            <person name="Yu K."/>
            <person name="Banh C."/>
            <person name="Nguyen V."/>
            <person name="Ritz A."/>
            <person name="Raphael B.J."/>
            <person name="Kawakami Y."/>
            <person name="Kawakami T."/>
            <person name="Salomon A.R."/>
        </authorList>
    </citation>
    <scope>PHOSPHORYLATION [LARGE SCALE ANALYSIS] AT TYR-937</scope>
    <scope>IDENTIFICATION BY MASS SPECTROMETRY [LARGE SCALE ANALYSIS]</scope>
    <source>
        <tissue>Mast cell</tissue>
    </source>
</reference>
<reference key="6">
    <citation type="journal article" date="2008" name="Science">
        <title>Segregation of axial motor and sensory pathways via heterotypic trans-axonal signaling.</title>
        <authorList>
            <person name="Gallarda B.W."/>
            <person name="Bonanomi D."/>
            <person name="Mueller D."/>
            <person name="Brown A."/>
            <person name="Alaynick W.A."/>
            <person name="Andrews S.E."/>
            <person name="Lemke G."/>
            <person name="Pfaff S.L."/>
            <person name="Marquardt T."/>
        </authorList>
    </citation>
    <scope>FUNCTION IN MOTOR AND SENSORY AXONS SEGREGATION</scope>
</reference>
<reference key="7">
    <citation type="journal article" date="2009" name="Biochemistry">
        <title>Regulation of process retraction and cell migration by EphA3 is mediated by the adaptor protein Nck1.</title>
        <authorList>
            <person name="Hu T."/>
            <person name="Shi G."/>
            <person name="Larose L."/>
            <person name="Rivera G.M."/>
            <person name="Mayer B.J."/>
            <person name="Zhou R."/>
        </authorList>
    </citation>
    <scope>FUNCTION IN CELL MIGRATION</scope>
    <scope>INTERACTION WITH NCK1</scope>
</reference>
<reference key="8">
    <citation type="journal article" date="2016" name="Front. Cell Dev. Biol.">
        <title>Gene expression profiling of muscle stem cells identifies novel regulators of postnatal myogenesis.</title>
        <authorList>
            <person name="Alonso-Martin S."/>
            <person name="Rochat A."/>
            <person name="Mademtzoglou D."/>
            <person name="Morais J."/>
            <person name="de Reynies A."/>
            <person name="Aurade F."/>
            <person name="Chang T.H."/>
            <person name="Zammit P.S."/>
            <person name="Relaix F."/>
        </authorList>
    </citation>
    <scope>DEVELOPMENTAL STAGE</scope>
    <scope>TISSUE SPECIFICITY</scope>
</reference>
<accession>P29319</accession>
<protein>
    <recommendedName>
        <fullName>Ephrin type-A receptor 3</fullName>
        <ecNumber>2.7.10.1</ecNumber>
    </recommendedName>
    <alternativeName>
        <fullName>EPH-like kinase 4</fullName>
        <shortName>EK4</shortName>
        <shortName>mEK4</shortName>
    </alternativeName>
    <alternativeName>
        <fullName>Tyrosine-protein kinase TYRO4</fullName>
    </alternativeName>
    <alternativeName>
        <fullName>Tyrosine-protein kinase receptor ETK1</fullName>
    </alternativeName>
</protein>
<comment type="function">
    <text evidence="11 12 13">Receptor tyrosine kinase which binds promiscuously membrane-bound ephrin family ligands residing on adjacent cells, leading to contact-dependent bidirectional signaling into neighboring cells. The signaling pathway downstream of the receptor is referred to as forward signaling while the signaling pathway downstream of the ephrin ligand is referred to as reverse signaling. Highly promiscuous for ephrin-A ligands it binds preferentially EFNA5. Upon activation by EFNA5 regulates cell-cell adhesion, cytoskeletal organization and cell migration. Plays a role in cardiac cells migration and differentiation and regulates the formation of the atrioventricular canal and septum during development probably through activation by EFNA1. Involved in the retinotectal mapping of neurons. May also control the segregation but not the guidance of motor and sensory axons during neuromuscular circuit development.</text>
</comment>
<comment type="catalytic activity">
    <reaction evidence="8">
        <text>L-tyrosyl-[protein] + ATP = O-phospho-L-tyrosyl-[protein] + ADP + H(+)</text>
        <dbReference type="Rhea" id="RHEA:10596"/>
        <dbReference type="Rhea" id="RHEA-COMP:10136"/>
        <dbReference type="Rhea" id="RHEA-COMP:20101"/>
        <dbReference type="ChEBI" id="CHEBI:15378"/>
        <dbReference type="ChEBI" id="CHEBI:30616"/>
        <dbReference type="ChEBI" id="CHEBI:46858"/>
        <dbReference type="ChEBI" id="CHEBI:61978"/>
        <dbReference type="ChEBI" id="CHEBI:456216"/>
        <dbReference type="EC" id="2.7.10.1"/>
    </reaction>
</comment>
<comment type="subunit">
    <text evidence="1 9 13">Heterotetramer upon binding of the ligand. The heterotetramer is composed of an ephrin dimer and a receptor dimer. Oligomerization is probably required to induce biological responses. Forms a ternary EFNA5-EPHA3-ADAM10 complex mediating EFNA5 extracellular domain shedding by ADAM10 which regulates the EFNA5-EPHA3 complex internalization and function. Interacts (phosphorylated) with PTPN1; dephosphorylates EPHA3 and may regulate its trafficking and function (By similarity). Interacts (phosphorylated) with CRK; mediates EFNA5-EPHA3 signaling through RHOA GTPase activation. Interacts with NCK1 (via SH2 domain); mediates EFNA5-EPHA3 signaling.</text>
</comment>
<comment type="subcellular location">
    <molecule>Isoform Long</molecule>
    <subcellularLocation>
        <location evidence="2">Cell membrane</location>
        <topology evidence="3">Single-pass type I membrane protein</topology>
    </subcellularLocation>
</comment>
<comment type="subcellular location">
    <molecule>Isoform Short</molecule>
    <subcellularLocation>
        <location evidence="2">Secreted</location>
    </subcellularLocation>
</comment>
<comment type="alternative products">
    <event type="alternative splicing"/>
    <isoform>
        <id>P29319-1</id>
        <name>Long</name>
        <sequence type="displayed"/>
    </isoform>
    <isoform>
        <id>P29319-3</id>
        <name>Short</name>
        <sequence type="described" ref="VSP_041882 VSP_041883"/>
    </isoform>
</comment>
<comment type="tissue specificity">
    <text evidence="14">Greatest levels of expression occurring in the brain, also detected in testis. Expressed in myogenic progenitor cells (PubMed:27446912).</text>
</comment>
<comment type="developmental stage">
    <text evidence="10 11 14">Specifically expressed in heart during its development by mesenchymal cells of the endocardial cushions. Expressed in motor neurons at 11.5 dpc. In myogenic progenitor cells, highly expressed, at least as early as 11.5 dpc, expression decreases until 4 weeks after birth (PubMed:27446912).</text>
</comment>
<comment type="PTM">
    <text evidence="1">Autophosphorylates upon activation by EFNA5. Phosphorylation on Tyr-602 mediates interaction with NCK1. Dephosphorylated by PTPN1 (By similarity).</text>
</comment>
<comment type="disruption phenotype">
    <text evidence="10 11">Mice die perinatally due to cardiac failure.</text>
</comment>
<comment type="similarity">
    <text evidence="4">Belongs to the protein kinase superfamily. Tyr protein kinase family. Ephrin receptor subfamily.</text>
</comment>
<sequence length="983" mass="109955">MDCHLSILVLLGCCVLSCSGELSPQPSNEVNLLDSKTIQGELGWISYPSHGWEEISGVDEHYTPIRTYQVCNVMDHSQNNWLRTNWVPRNSAQKIYVELKFTLRDCNSIPLVLGTCKETFNLYYMESDDHGVKFREHQFTKIDTIAADESFTQMDLGDRILKLNTEIREVGPVNKKGFYLAFQDVGACVALVSVRVYFKKCPFTVKNLAMFPDTVPMDSQSLVEVRGSCVNNSKEEDPPRMYCSTEGEWLVPIGKCTCNAGYEERGFICQACRPGFYKASDGAAKCAKCPPHSSTQEDGSMNCRCENNYFRAEKDPPSMACARPPSAPRNVISNINETSVILDWSWPLDTGGRKDITFNIICKKCGWNVRQCEPCSPNVRFLPRQLGLTNTTVTVTDLLAHTNYTFEIDAVNGVSELSSPPRQYAAVSITTNQAAPSPVMTIKKDRTSRNSISLSWQEPEHPNGIILDYEVKYYQKQEQETSYTILRARGTNVTISSLKPDTTYVFQIRARTAAGYGTNSRKFEFETSPDSFSISGENSHVVMIAISAAVAIIVLTVVTYVLVGRFCGYHKSKHSAEEKRLHFGNGHLKLPGLRTYVDPHTYEDPTQAVHEFAKELDATNISIDKVVGAGEFGEVCSGRLKLPSKKEISVAIKTLKVGYTEKQRRDFLGEASIMGQFDHPNIIRLEGVVTKSKPEMIVTEYMENGSLDSFLRKHDAQFTVIQLVGMLRGIASGMKYLSDMGYVHRDLAARNILINSNLVCKVSDFGLSRVLEDDPEAAYTTRGGKIPIRWTSPEAMSYRKFTSASDVWSYGIVLWEVMSYGERPYSQMSNQDVIKAVDERYRLPPPMDCPAALYQLMLDCWQKDRNNRPKFEQIVSILDKLIRNPGSLKIITSAAARPSNLLLDQSNVDIATFHTTGDWLNGMRTAHCKEIFTGVEYSSCDTIAKISTDDMKKVGVTVVGPQKKIISTIKALETQSKNGPVPV</sequence>
<gene>
    <name type="primary">Epha3</name>
    <name type="synonym">Etk1</name>
    <name type="synonym">Mek4</name>
    <name type="synonym">Tyro4</name>
</gene>
<keyword id="KW-0025">Alternative splicing</keyword>
<keyword id="KW-0067">ATP-binding</keyword>
<keyword id="KW-1003">Cell membrane</keyword>
<keyword id="KW-0325">Glycoprotein</keyword>
<keyword id="KW-0418">Kinase</keyword>
<keyword id="KW-0472">Membrane</keyword>
<keyword id="KW-0547">Nucleotide-binding</keyword>
<keyword id="KW-0597">Phosphoprotein</keyword>
<keyword id="KW-0675">Receptor</keyword>
<keyword id="KW-1185">Reference proteome</keyword>
<keyword id="KW-0677">Repeat</keyword>
<keyword id="KW-0964">Secreted</keyword>
<keyword id="KW-0732">Signal</keyword>
<keyword id="KW-0808">Transferase</keyword>
<keyword id="KW-0812">Transmembrane</keyword>
<keyword id="KW-1133">Transmembrane helix</keyword>
<keyword id="KW-0829">Tyrosine-protein kinase</keyword>